<proteinExistence type="inferred from homology"/>
<organism>
    <name type="scientific">Shouchella clausii (strain KSM-K16)</name>
    <name type="common">Alkalihalobacillus clausii</name>
    <dbReference type="NCBI Taxonomy" id="66692"/>
    <lineage>
        <taxon>Bacteria</taxon>
        <taxon>Bacillati</taxon>
        <taxon>Bacillota</taxon>
        <taxon>Bacilli</taxon>
        <taxon>Bacillales</taxon>
        <taxon>Bacillaceae</taxon>
        <taxon>Shouchella</taxon>
    </lineage>
</organism>
<dbReference type="EC" id="2.7.7.56" evidence="1"/>
<dbReference type="EMBL" id="AP006627">
    <property type="protein sequence ID" value="BAD65187.1"/>
    <property type="molecule type" value="Genomic_DNA"/>
</dbReference>
<dbReference type="RefSeq" id="WP_011247495.1">
    <property type="nucleotide sequence ID" value="NC_006582.1"/>
</dbReference>
<dbReference type="SMR" id="Q5WEM3"/>
<dbReference type="STRING" id="66692.ABC2652"/>
<dbReference type="KEGG" id="bcl:ABC2652"/>
<dbReference type="eggNOG" id="COG0689">
    <property type="taxonomic scope" value="Bacteria"/>
</dbReference>
<dbReference type="HOGENOM" id="CLU_050858_0_0_9"/>
<dbReference type="OrthoDB" id="9802265at2"/>
<dbReference type="Proteomes" id="UP000001168">
    <property type="component" value="Chromosome"/>
</dbReference>
<dbReference type="GO" id="GO:0000175">
    <property type="term" value="F:3'-5'-RNA exonuclease activity"/>
    <property type="evidence" value="ECO:0007669"/>
    <property type="project" value="UniProtKB-UniRule"/>
</dbReference>
<dbReference type="GO" id="GO:0000049">
    <property type="term" value="F:tRNA binding"/>
    <property type="evidence" value="ECO:0007669"/>
    <property type="project" value="UniProtKB-UniRule"/>
</dbReference>
<dbReference type="GO" id="GO:0009022">
    <property type="term" value="F:tRNA nucleotidyltransferase activity"/>
    <property type="evidence" value="ECO:0007669"/>
    <property type="project" value="UniProtKB-UniRule"/>
</dbReference>
<dbReference type="GO" id="GO:0016075">
    <property type="term" value="P:rRNA catabolic process"/>
    <property type="evidence" value="ECO:0007669"/>
    <property type="project" value="UniProtKB-UniRule"/>
</dbReference>
<dbReference type="GO" id="GO:0006364">
    <property type="term" value="P:rRNA processing"/>
    <property type="evidence" value="ECO:0007669"/>
    <property type="project" value="UniProtKB-KW"/>
</dbReference>
<dbReference type="GO" id="GO:0008033">
    <property type="term" value="P:tRNA processing"/>
    <property type="evidence" value="ECO:0007669"/>
    <property type="project" value="UniProtKB-UniRule"/>
</dbReference>
<dbReference type="CDD" id="cd11362">
    <property type="entry name" value="RNase_PH_bact"/>
    <property type="match status" value="1"/>
</dbReference>
<dbReference type="FunFam" id="3.30.230.70:FF:000003">
    <property type="entry name" value="Ribonuclease PH"/>
    <property type="match status" value="1"/>
</dbReference>
<dbReference type="Gene3D" id="3.30.230.70">
    <property type="entry name" value="GHMP Kinase, N-terminal domain"/>
    <property type="match status" value="1"/>
</dbReference>
<dbReference type="HAMAP" id="MF_00564">
    <property type="entry name" value="RNase_PH"/>
    <property type="match status" value="1"/>
</dbReference>
<dbReference type="InterPro" id="IPR001247">
    <property type="entry name" value="ExoRNase_PH_dom1"/>
</dbReference>
<dbReference type="InterPro" id="IPR015847">
    <property type="entry name" value="ExoRNase_PH_dom2"/>
</dbReference>
<dbReference type="InterPro" id="IPR036345">
    <property type="entry name" value="ExoRNase_PH_dom2_sf"/>
</dbReference>
<dbReference type="InterPro" id="IPR027408">
    <property type="entry name" value="PNPase/RNase_PH_dom_sf"/>
</dbReference>
<dbReference type="InterPro" id="IPR020568">
    <property type="entry name" value="Ribosomal_Su5_D2-typ_SF"/>
</dbReference>
<dbReference type="InterPro" id="IPR050080">
    <property type="entry name" value="RNase_PH"/>
</dbReference>
<dbReference type="InterPro" id="IPR002381">
    <property type="entry name" value="RNase_PH_bac-type"/>
</dbReference>
<dbReference type="InterPro" id="IPR018336">
    <property type="entry name" value="RNase_PH_CS"/>
</dbReference>
<dbReference type="NCBIfam" id="TIGR01966">
    <property type="entry name" value="RNasePH"/>
    <property type="match status" value="1"/>
</dbReference>
<dbReference type="PANTHER" id="PTHR11953">
    <property type="entry name" value="EXOSOME COMPLEX COMPONENT"/>
    <property type="match status" value="1"/>
</dbReference>
<dbReference type="PANTHER" id="PTHR11953:SF0">
    <property type="entry name" value="EXOSOME COMPLEX COMPONENT RRP41"/>
    <property type="match status" value="1"/>
</dbReference>
<dbReference type="Pfam" id="PF01138">
    <property type="entry name" value="RNase_PH"/>
    <property type="match status" value="1"/>
</dbReference>
<dbReference type="Pfam" id="PF03725">
    <property type="entry name" value="RNase_PH_C"/>
    <property type="match status" value="1"/>
</dbReference>
<dbReference type="SUPFAM" id="SSF55666">
    <property type="entry name" value="Ribonuclease PH domain 2-like"/>
    <property type="match status" value="1"/>
</dbReference>
<dbReference type="SUPFAM" id="SSF54211">
    <property type="entry name" value="Ribosomal protein S5 domain 2-like"/>
    <property type="match status" value="1"/>
</dbReference>
<dbReference type="PROSITE" id="PS01277">
    <property type="entry name" value="RIBONUCLEASE_PH"/>
    <property type="match status" value="1"/>
</dbReference>
<reference key="1">
    <citation type="submission" date="2003-10" db="EMBL/GenBank/DDBJ databases">
        <title>The complete genome sequence of the alkaliphilic Bacillus clausii KSM-K16.</title>
        <authorList>
            <person name="Takaki Y."/>
            <person name="Kageyama Y."/>
            <person name="Shimamura S."/>
            <person name="Suzuki H."/>
            <person name="Nishi S."/>
            <person name="Hatada Y."/>
            <person name="Kawai S."/>
            <person name="Ito S."/>
            <person name="Horikoshi K."/>
        </authorList>
    </citation>
    <scope>NUCLEOTIDE SEQUENCE [LARGE SCALE GENOMIC DNA]</scope>
    <source>
        <strain>KSM-K16</strain>
    </source>
</reference>
<name>RNPH_SHOC1</name>
<gene>
    <name evidence="1" type="primary">rph</name>
    <name type="ordered locus">ABC2652</name>
</gene>
<keyword id="KW-0548">Nucleotidyltransferase</keyword>
<keyword id="KW-1185">Reference proteome</keyword>
<keyword id="KW-0694">RNA-binding</keyword>
<keyword id="KW-0698">rRNA processing</keyword>
<keyword id="KW-0808">Transferase</keyword>
<keyword id="KW-0819">tRNA processing</keyword>
<keyword id="KW-0820">tRNA-binding</keyword>
<sequence>MRQDGRKQNQLREVEIIPHFTKHAEGSVLISVGDTKVICTASIENRVPPFLRGQNKGWLAAEYSMLPRATGQRTIREAAKGKLSGRTMEIQRLIGRALRAVVDLEKLGEKTIWIDCDVIQADGGTRTASITGAYVALVLAVQKAFAEKTISAWPITDFLAAISVGILPEEGAVCDLCYSEDSQAKVDMNIVQTGSGDFVEVQGSGEEAVYTRSELNELLDLAAEGIDQLIHIQRPFLGEAASWIEEKKGT</sequence>
<accession>Q5WEM3</accession>
<protein>
    <recommendedName>
        <fullName evidence="1">Ribonuclease PH</fullName>
        <shortName evidence="1">RNase PH</shortName>
        <ecNumber evidence="1">2.7.7.56</ecNumber>
    </recommendedName>
    <alternativeName>
        <fullName evidence="1">tRNA nucleotidyltransferase</fullName>
    </alternativeName>
</protein>
<comment type="function">
    <text evidence="1">Phosphorolytic 3'-5' exoribonuclease that plays an important role in tRNA 3'-end maturation. Removes nucleotide residues following the 3'-CCA terminus of tRNAs; can also add nucleotides to the ends of RNA molecules by using nucleoside diphosphates as substrates, but this may not be physiologically important. Probably plays a role in initiation of 16S rRNA degradation (leading to ribosome degradation) during starvation.</text>
</comment>
<comment type="catalytic activity">
    <reaction evidence="1">
        <text>tRNA(n+1) + phosphate = tRNA(n) + a ribonucleoside 5'-diphosphate</text>
        <dbReference type="Rhea" id="RHEA:10628"/>
        <dbReference type="Rhea" id="RHEA-COMP:17343"/>
        <dbReference type="Rhea" id="RHEA-COMP:17344"/>
        <dbReference type="ChEBI" id="CHEBI:43474"/>
        <dbReference type="ChEBI" id="CHEBI:57930"/>
        <dbReference type="ChEBI" id="CHEBI:173114"/>
        <dbReference type="EC" id="2.7.7.56"/>
    </reaction>
</comment>
<comment type="subunit">
    <text evidence="1">Homohexameric ring arranged as a trimer of dimers.</text>
</comment>
<comment type="similarity">
    <text evidence="1">Belongs to the RNase PH family.</text>
</comment>
<feature type="chain" id="PRO_0000139868" description="Ribonuclease PH">
    <location>
        <begin position="1"/>
        <end position="250"/>
    </location>
</feature>
<feature type="binding site" evidence="1">
    <location>
        <position position="86"/>
    </location>
    <ligand>
        <name>phosphate</name>
        <dbReference type="ChEBI" id="CHEBI:43474"/>
        <note>substrate</note>
    </ligand>
</feature>
<feature type="binding site" evidence="1">
    <location>
        <begin position="124"/>
        <end position="126"/>
    </location>
    <ligand>
        <name>phosphate</name>
        <dbReference type="ChEBI" id="CHEBI:43474"/>
        <note>substrate</note>
    </ligand>
</feature>
<evidence type="ECO:0000255" key="1">
    <source>
        <dbReference type="HAMAP-Rule" id="MF_00564"/>
    </source>
</evidence>